<dbReference type="EC" id="3.4.24.-" evidence="1"/>
<dbReference type="EMBL" id="CP000454">
    <property type="protein sequence ID" value="ABK04453.1"/>
    <property type="molecule type" value="Genomic_DNA"/>
</dbReference>
<dbReference type="RefSeq" id="WP_011692904.1">
    <property type="nucleotide sequence ID" value="NC_008541.1"/>
</dbReference>
<dbReference type="STRING" id="290399.Arth_3074"/>
<dbReference type="KEGG" id="art:Arth_3074"/>
<dbReference type="eggNOG" id="COG0501">
    <property type="taxonomic scope" value="Bacteria"/>
</dbReference>
<dbReference type="HOGENOM" id="CLU_042266_3_1_11"/>
<dbReference type="OrthoDB" id="15218at2"/>
<dbReference type="Proteomes" id="UP000000754">
    <property type="component" value="Chromosome"/>
</dbReference>
<dbReference type="GO" id="GO:0005886">
    <property type="term" value="C:plasma membrane"/>
    <property type="evidence" value="ECO:0007669"/>
    <property type="project" value="UniProtKB-SubCell"/>
</dbReference>
<dbReference type="GO" id="GO:0004222">
    <property type="term" value="F:metalloendopeptidase activity"/>
    <property type="evidence" value="ECO:0007669"/>
    <property type="project" value="UniProtKB-UniRule"/>
</dbReference>
<dbReference type="GO" id="GO:0008270">
    <property type="term" value="F:zinc ion binding"/>
    <property type="evidence" value="ECO:0007669"/>
    <property type="project" value="UniProtKB-UniRule"/>
</dbReference>
<dbReference type="GO" id="GO:0006508">
    <property type="term" value="P:proteolysis"/>
    <property type="evidence" value="ECO:0007669"/>
    <property type="project" value="UniProtKB-KW"/>
</dbReference>
<dbReference type="Gene3D" id="3.30.2010.10">
    <property type="entry name" value="Metalloproteases ('zincins'), catalytic domain"/>
    <property type="match status" value="1"/>
</dbReference>
<dbReference type="HAMAP" id="MF_00188">
    <property type="entry name" value="Pept_M48_protease_HtpX"/>
    <property type="match status" value="1"/>
</dbReference>
<dbReference type="InterPro" id="IPR050083">
    <property type="entry name" value="HtpX_protease"/>
</dbReference>
<dbReference type="InterPro" id="IPR022919">
    <property type="entry name" value="Pept_M48_protease_HtpX"/>
</dbReference>
<dbReference type="InterPro" id="IPR001915">
    <property type="entry name" value="Peptidase_M48"/>
</dbReference>
<dbReference type="NCBIfam" id="NF002839">
    <property type="entry name" value="PRK03072.1"/>
    <property type="match status" value="1"/>
</dbReference>
<dbReference type="PANTHER" id="PTHR43221">
    <property type="entry name" value="PROTEASE HTPX"/>
    <property type="match status" value="1"/>
</dbReference>
<dbReference type="PANTHER" id="PTHR43221:SF1">
    <property type="entry name" value="PROTEASE HTPX"/>
    <property type="match status" value="1"/>
</dbReference>
<dbReference type="Pfam" id="PF01435">
    <property type="entry name" value="Peptidase_M48"/>
    <property type="match status" value="1"/>
</dbReference>
<dbReference type="PROSITE" id="PS00142">
    <property type="entry name" value="ZINC_PROTEASE"/>
    <property type="match status" value="1"/>
</dbReference>
<feature type="chain" id="PRO_1000020844" description="Protease HtpX homolog">
    <location>
        <begin position="1"/>
        <end position="289"/>
    </location>
</feature>
<feature type="transmembrane region" description="Helical" evidence="1">
    <location>
        <begin position="10"/>
        <end position="30"/>
    </location>
</feature>
<feature type="transmembrane region" description="Helical" evidence="1">
    <location>
        <begin position="34"/>
        <end position="54"/>
    </location>
</feature>
<feature type="transmembrane region" description="Helical" evidence="1">
    <location>
        <begin position="153"/>
        <end position="173"/>
    </location>
</feature>
<feature type="transmembrane region" description="Helical" evidence="1">
    <location>
        <begin position="182"/>
        <end position="202"/>
    </location>
</feature>
<feature type="active site" evidence="1">
    <location>
        <position position="139"/>
    </location>
</feature>
<feature type="binding site" evidence="1">
    <location>
        <position position="138"/>
    </location>
    <ligand>
        <name>Zn(2+)</name>
        <dbReference type="ChEBI" id="CHEBI:29105"/>
        <note>catalytic</note>
    </ligand>
</feature>
<feature type="binding site" evidence="1">
    <location>
        <position position="142"/>
    </location>
    <ligand>
        <name>Zn(2+)</name>
        <dbReference type="ChEBI" id="CHEBI:29105"/>
        <note>catalytic</note>
    </ligand>
</feature>
<feature type="binding site" evidence="1">
    <location>
        <position position="207"/>
    </location>
    <ligand>
        <name>Zn(2+)</name>
        <dbReference type="ChEBI" id="CHEBI:29105"/>
        <note>catalytic</note>
    </ligand>
</feature>
<name>HTPX_ARTS2</name>
<reference key="1">
    <citation type="journal article" date="2013" name="Stand. Genomic Sci.">
        <title>Complete genome sequence of Arthrobacter sp. strain FB24.</title>
        <authorList>
            <person name="Nakatsu C.H."/>
            <person name="Barabote R."/>
            <person name="Thompson S."/>
            <person name="Bruce D."/>
            <person name="Detter C."/>
            <person name="Brettin T."/>
            <person name="Han C."/>
            <person name="Beasley F."/>
            <person name="Chen W."/>
            <person name="Konopka A."/>
            <person name="Xie G."/>
        </authorList>
    </citation>
    <scope>NUCLEOTIDE SEQUENCE [LARGE SCALE GENOMIC DNA]</scope>
    <source>
        <strain>FB24</strain>
    </source>
</reference>
<organism>
    <name type="scientific">Arthrobacter sp. (strain FB24)</name>
    <dbReference type="NCBI Taxonomy" id="290399"/>
    <lineage>
        <taxon>Bacteria</taxon>
        <taxon>Bacillati</taxon>
        <taxon>Actinomycetota</taxon>
        <taxon>Actinomycetes</taxon>
        <taxon>Micrococcales</taxon>
        <taxon>Micrococcaceae</taxon>
        <taxon>Arthrobacter</taxon>
    </lineage>
</organism>
<gene>
    <name evidence="1" type="primary">htpX</name>
    <name type="ordered locus">Arth_3074</name>
</gene>
<accession>A0JZI3</accession>
<comment type="cofactor">
    <cofactor evidence="1">
        <name>Zn(2+)</name>
        <dbReference type="ChEBI" id="CHEBI:29105"/>
    </cofactor>
    <text evidence="1">Binds 1 zinc ion per subunit.</text>
</comment>
<comment type="subcellular location">
    <subcellularLocation>
        <location evidence="1">Cell membrane</location>
        <topology evidence="1">Multi-pass membrane protein</topology>
    </subcellularLocation>
</comment>
<comment type="similarity">
    <text evidence="1">Belongs to the peptidase M48B family.</text>
</comment>
<protein>
    <recommendedName>
        <fullName evidence="1">Protease HtpX homolog</fullName>
        <ecNumber evidence="1">3.4.24.-</ecNumber>
    </recommendedName>
</protein>
<sequence>MHNHHNGLKTAALFGVLWAVLLGLGAVIGSSMRSTTPIWIMALVGVGTTAYGYWNSDKLALRSMQAYPVTEEQAPQLYQIVRELSAKANQPMPRIYVSPTPAPNAFATGRNPQNAAVCCTEGILRLLSLRELRGVLGHELMHVYNRDILTSSVAAAVAGVITSVGQMLLIFGGGDRRNSNPLAVMAMALLAPLAAVVIQSAISRTREYDADEDGSALTGDPLALASALRKIHQGVQMVPLPPDQKLVNTSHLMIANPFRAGGVTRMFATHPPMQDRITRLELMAGGPAS</sequence>
<keyword id="KW-1003">Cell membrane</keyword>
<keyword id="KW-0378">Hydrolase</keyword>
<keyword id="KW-0472">Membrane</keyword>
<keyword id="KW-0479">Metal-binding</keyword>
<keyword id="KW-0482">Metalloprotease</keyword>
<keyword id="KW-0645">Protease</keyword>
<keyword id="KW-1185">Reference proteome</keyword>
<keyword id="KW-0812">Transmembrane</keyword>
<keyword id="KW-1133">Transmembrane helix</keyword>
<keyword id="KW-0862">Zinc</keyword>
<evidence type="ECO:0000255" key="1">
    <source>
        <dbReference type="HAMAP-Rule" id="MF_00188"/>
    </source>
</evidence>
<proteinExistence type="inferred from homology"/>